<evidence type="ECO:0000255" key="1">
    <source>
        <dbReference type="HAMAP-Rule" id="MF_00270"/>
    </source>
</evidence>
<evidence type="ECO:0000305" key="2"/>
<comment type="function">
    <text evidence="1">Binds as a heterodimer with protein bS6 to the central domain of the 16S rRNA, where it helps stabilize the platform of the 30S subunit.</text>
</comment>
<comment type="subunit">
    <text evidence="1">Part of the 30S ribosomal subunit. Forms a tight heterodimer with protein bS6.</text>
</comment>
<comment type="similarity">
    <text evidence="1">Belongs to the bacterial ribosomal protein bS18 family.</text>
</comment>
<keyword id="KW-0687">Ribonucleoprotein</keyword>
<keyword id="KW-0689">Ribosomal protein</keyword>
<keyword id="KW-0694">RNA-binding</keyword>
<keyword id="KW-0699">rRNA-binding</keyword>
<feature type="chain" id="PRO_1000003464" description="Small ribosomal subunit protein bS18">
    <location>
        <begin position="1"/>
        <end position="91"/>
    </location>
</feature>
<sequence length="91" mass="10613">MARPTGKKFDKRRQQQNPLFKRKKFCRFTAAGVEQIDYKDTETLKDFIGENGKITPARLTGTKAHYQRQLDTAIKRARFLALLPYTDQHKA</sequence>
<organism>
    <name type="scientific">Burkholderia pseudomallei (strain 1710b)</name>
    <dbReference type="NCBI Taxonomy" id="320372"/>
    <lineage>
        <taxon>Bacteria</taxon>
        <taxon>Pseudomonadati</taxon>
        <taxon>Pseudomonadota</taxon>
        <taxon>Betaproteobacteria</taxon>
        <taxon>Burkholderiales</taxon>
        <taxon>Burkholderiaceae</taxon>
        <taxon>Burkholderia</taxon>
        <taxon>pseudomallei group</taxon>
    </lineage>
</organism>
<proteinExistence type="inferred from homology"/>
<dbReference type="EMBL" id="CP000124">
    <property type="protein sequence ID" value="ABA51168.1"/>
    <property type="molecule type" value="Genomic_DNA"/>
</dbReference>
<dbReference type="RefSeq" id="WP_004193360.1">
    <property type="nucleotide sequence ID" value="NC_007434.1"/>
</dbReference>
<dbReference type="SMR" id="Q3JRJ4"/>
<dbReference type="EnsemblBacteria" id="ABA51168">
    <property type="protein sequence ID" value="ABA51168"/>
    <property type="gene ID" value="BURPS1710b_2414"/>
</dbReference>
<dbReference type="GeneID" id="93173028"/>
<dbReference type="KEGG" id="bpm:BURPS1710b_2414"/>
<dbReference type="HOGENOM" id="CLU_148710_0_3_4"/>
<dbReference type="Proteomes" id="UP000002700">
    <property type="component" value="Chromosome I"/>
</dbReference>
<dbReference type="GO" id="GO:0022627">
    <property type="term" value="C:cytosolic small ribosomal subunit"/>
    <property type="evidence" value="ECO:0007669"/>
    <property type="project" value="TreeGrafter"/>
</dbReference>
<dbReference type="GO" id="GO:0070181">
    <property type="term" value="F:small ribosomal subunit rRNA binding"/>
    <property type="evidence" value="ECO:0007669"/>
    <property type="project" value="TreeGrafter"/>
</dbReference>
<dbReference type="GO" id="GO:0003735">
    <property type="term" value="F:structural constituent of ribosome"/>
    <property type="evidence" value="ECO:0007669"/>
    <property type="project" value="InterPro"/>
</dbReference>
<dbReference type="GO" id="GO:0006412">
    <property type="term" value="P:translation"/>
    <property type="evidence" value="ECO:0007669"/>
    <property type="project" value="UniProtKB-UniRule"/>
</dbReference>
<dbReference type="Gene3D" id="4.10.640.10">
    <property type="entry name" value="Ribosomal protein S18"/>
    <property type="match status" value="1"/>
</dbReference>
<dbReference type="HAMAP" id="MF_00270">
    <property type="entry name" value="Ribosomal_bS18"/>
    <property type="match status" value="1"/>
</dbReference>
<dbReference type="InterPro" id="IPR001648">
    <property type="entry name" value="Ribosomal_bS18"/>
</dbReference>
<dbReference type="InterPro" id="IPR018275">
    <property type="entry name" value="Ribosomal_bS18_CS"/>
</dbReference>
<dbReference type="InterPro" id="IPR036870">
    <property type="entry name" value="Ribosomal_bS18_sf"/>
</dbReference>
<dbReference type="NCBIfam" id="TIGR00165">
    <property type="entry name" value="S18"/>
    <property type="match status" value="1"/>
</dbReference>
<dbReference type="PANTHER" id="PTHR13479">
    <property type="entry name" value="30S RIBOSOMAL PROTEIN S18"/>
    <property type="match status" value="1"/>
</dbReference>
<dbReference type="PANTHER" id="PTHR13479:SF40">
    <property type="entry name" value="SMALL RIBOSOMAL SUBUNIT PROTEIN BS18M"/>
    <property type="match status" value="1"/>
</dbReference>
<dbReference type="Pfam" id="PF01084">
    <property type="entry name" value="Ribosomal_S18"/>
    <property type="match status" value="1"/>
</dbReference>
<dbReference type="PRINTS" id="PR00974">
    <property type="entry name" value="RIBOSOMALS18"/>
</dbReference>
<dbReference type="SUPFAM" id="SSF46911">
    <property type="entry name" value="Ribosomal protein S18"/>
    <property type="match status" value="1"/>
</dbReference>
<dbReference type="PROSITE" id="PS00057">
    <property type="entry name" value="RIBOSOMAL_S18"/>
    <property type="match status" value="1"/>
</dbReference>
<name>RS18_BURP1</name>
<protein>
    <recommendedName>
        <fullName evidence="1">Small ribosomal subunit protein bS18</fullName>
    </recommendedName>
    <alternativeName>
        <fullName evidence="2">30S ribosomal protein S18</fullName>
    </alternativeName>
</protein>
<reference key="1">
    <citation type="journal article" date="2010" name="Genome Biol. Evol.">
        <title>Continuing evolution of Burkholderia mallei through genome reduction and large-scale rearrangements.</title>
        <authorList>
            <person name="Losada L."/>
            <person name="Ronning C.M."/>
            <person name="DeShazer D."/>
            <person name="Woods D."/>
            <person name="Fedorova N."/>
            <person name="Kim H.S."/>
            <person name="Shabalina S.A."/>
            <person name="Pearson T.R."/>
            <person name="Brinkac L."/>
            <person name="Tan P."/>
            <person name="Nandi T."/>
            <person name="Crabtree J."/>
            <person name="Badger J."/>
            <person name="Beckstrom-Sternberg S."/>
            <person name="Saqib M."/>
            <person name="Schutzer S.E."/>
            <person name="Keim P."/>
            <person name="Nierman W.C."/>
        </authorList>
    </citation>
    <scope>NUCLEOTIDE SEQUENCE [LARGE SCALE GENOMIC DNA]</scope>
    <source>
        <strain>1710b</strain>
    </source>
</reference>
<accession>Q3JRJ4</accession>
<gene>
    <name evidence="1" type="primary">rpsR</name>
    <name type="ordered locus">BURPS1710b_2414</name>
</gene>